<organism>
    <name type="scientific">Saccharomyces cerevisiae (strain ATCC 204508 / S288c)</name>
    <name type="common">Baker's yeast</name>
    <dbReference type="NCBI Taxonomy" id="559292"/>
    <lineage>
        <taxon>Eukaryota</taxon>
        <taxon>Fungi</taxon>
        <taxon>Dikarya</taxon>
        <taxon>Ascomycota</taxon>
        <taxon>Saccharomycotina</taxon>
        <taxon>Saccharomycetes</taxon>
        <taxon>Saccharomycetales</taxon>
        <taxon>Saccharomycetaceae</taxon>
        <taxon>Saccharomyces</taxon>
    </lineage>
</organism>
<gene>
    <name type="primary">YAT1</name>
    <name type="ordered locus">YAR035W</name>
</gene>
<sequence length="687" mass="77766">MPNLKRLPIPPLQDTLNRYLARVEPLQDERQNRRTRRTVLSAENLDALNTLHERLLEYDARLAESNPESSYIEQFWYDAYLLYDATVVLNVNPYFQLQDDPTIKDTPETAAQGPYGAHTVQVRRAARLTTSILKFIRQIRHGTLRTDTVRGKTPLSMDQYERLFGSSRIPPGPGEPSCHLQTDATSHHVVAMYRGQFYWFDVLDTRNEPIFATPEQLEWNLYSIIMDAESAGSGSAPFGVFTTESRRVWSNIRDYLFHADDCTNWRNLKLIDSALFVVCLDDVAFAADQQDELTRSMLCGTSTINLDPHQHQPPLNVQTGTCLNRWYDKLQLIVTKNGKAGINFEHTGVDGHTVLRLATDIYTDSILSFARGVTKNVVDIFSDDDGKPSSSSLASAAHSANLITIPRKLEWRTDNFLQSSLHFAETRISDLISQYEFVNLDFSNYGASHIKTVFKCSPDAFVQQVFQVAYFALYGRFETVYEPAMTKAFQNGRTEAIRSVTGQSKLFVKSLLDQDASDATKIQLLHDACTAHSQITRECSQGLGQDRHLYALYCLWNQWYKDKLELPPIFRDKSWTTMQNNVLSTSNCGNPCLKSFGFGPVTANGFGIGYIIRDHSVSVVVSSRHRQTARFASLMEKSLLEIDRIFKRQQARAAKPAARTTASANTKSEDMKYLLSGYDYFDVSVSG</sequence>
<proteinExistence type="evidence at protein level"/>
<comment type="function">
    <text>Involved in the transfer of acetyl-CoA into mitochondria. May also be involved in the metabolism of acetate and of ethanol.</text>
</comment>
<comment type="catalytic activity">
    <reaction>
        <text>(R)-carnitine + acetyl-CoA = O-acetyl-(R)-carnitine + CoA</text>
        <dbReference type="Rhea" id="RHEA:21136"/>
        <dbReference type="ChEBI" id="CHEBI:16347"/>
        <dbReference type="ChEBI" id="CHEBI:57287"/>
        <dbReference type="ChEBI" id="CHEBI:57288"/>
        <dbReference type="ChEBI" id="CHEBI:57589"/>
        <dbReference type="EC" id="2.3.1.7"/>
    </reaction>
</comment>
<comment type="interaction">
    <interactant intactId="EBI-3928">
        <id>P80235</id>
    </interactant>
    <interactant intactId="EBI-2345299">
        <id>P40017</id>
        <label>YAT2</label>
    </interactant>
    <organismsDiffer>false</organismsDiffer>
    <experiments>2</experiments>
</comment>
<comment type="subcellular location">
    <subcellularLocation>
        <location>Mitochondrion inner membrane</location>
        <topology>Peripheral membrane protein</topology>
        <orientation>Intermembrane side</orientation>
    </subcellularLocation>
</comment>
<comment type="induction">
    <text>By ethanol and by acetate. Repressed by glucose, and to a lesser extent, by galactose. Derepressed by glycerol.</text>
</comment>
<comment type="similarity">
    <text evidence="2">Belongs to the carnitine/choline acetyltransferase family.</text>
</comment>
<dbReference type="EC" id="2.3.1.7"/>
<dbReference type="EMBL" id="X74553">
    <property type="protein sequence ID" value="CAA52647.1"/>
    <property type="molecule type" value="Genomic_DNA"/>
</dbReference>
<dbReference type="EMBL" id="L28920">
    <property type="protein sequence ID" value="AAC09495.1"/>
    <property type="molecule type" value="Genomic_DNA"/>
</dbReference>
<dbReference type="EMBL" id="BK006935">
    <property type="protein sequence ID" value="DAA07004.1"/>
    <property type="molecule type" value="Genomic_DNA"/>
</dbReference>
<dbReference type="PIR" id="S53485">
    <property type="entry name" value="S53485"/>
</dbReference>
<dbReference type="RefSeq" id="NP_009420.1">
    <property type="nucleotide sequence ID" value="NM_001178226.1"/>
</dbReference>
<dbReference type="SMR" id="P80235"/>
<dbReference type="BioGRID" id="31811">
    <property type="interactions" value="43"/>
</dbReference>
<dbReference type="DIP" id="DIP-3795N"/>
<dbReference type="FunCoup" id="P80235">
    <property type="interactions" value="629"/>
</dbReference>
<dbReference type="IntAct" id="P80235">
    <property type="interactions" value="13"/>
</dbReference>
<dbReference type="MINT" id="P80235"/>
<dbReference type="STRING" id="4932.YAR035W"/>
<dbReference type="iPTMnet" id="P80235"/>
<dbReference type="PaxDb" id="4932-YAR035W"/>
<dbReference type="PeptideAtlas" id="P80235"/>
<dbReference type="EnsemblFungi" id="YAR035W_mRNA">
    <property type="protein sequence ID" value="YAR035W"/>
    <property type="gene ID" value="YAR035W"/>
</dbReference>
<dbReference type="GeneID" id="851285"/>
<dbReference type="KEGG" id="sce:YAR035W"/>
<dbReference type="AGR" id="SGD:S000000080"/>
<dbReference type="SGD" id="S000000080">
    <property type="gene designation" value="YAT1"/>
</dbReference>
<dbReference type="VEuPathDB" id="FungiDB:YAR035W"/>
<dbReference type="eggNOG" id="KOG3719">
    <property type="taxonomic scope" value="Eukaryota"/>
</dbReference>
<dbReference type="GeneTree" id="ENSGT01130000278324"/>
<dbReference type="HOGENOM" id="CLU_013513_4_0_1"/>
<dbReference type="InParanoid" id="P80235"/>
<dbReference type="OMA" id="HILVMRR"/>
<dbReference type="OrthoDB" id="240216at2759"/>
<dbReference type="BioCyc" id="YEAST:YAR035W-MONOMER"/>
<dbReference type="BioGRID-ORCS" id="851285">
    <property type="hits" value="10 hits in 10 CRISPR screens"/>
</dbReference>
<dbReference type="PRO" id="PR:P80235"/>
<dbReference type="Proteomes" id="UP000002311">
    <property type="component" value="Chromosome I"/>
</dbReference>
<dbReference type="RNAct" id="P80235">
    <property type="molecule type" value="protein"/>
</dbReference>
<dbReference type="GO" id="GO:0005743">
    <property type="term" value="C:mitochondrial inner membrane"/>
    <property type="evidence" value="ECO:0007669"/>
    <property type="project" value="UniProtKB-SubCell"/>
</dbReference>
<dbReference type="GO" id="GO:0005739">
    <property type="term" value="C:mitochondrion"/>
    <property type="evidence" value="ECO:0000314"/>
    <property type="project" value="SGD"/>
</dbReference>
<dbReference type="GO" id="GO:0004092">
    <property type="term" value="F:carnitine O-acetyltransferase activity"/>
    <property type="evidence" value="ECO:0000318"/>
    <property type="project" value="GO_Central"/>
</dbReference>
<dbReference type="GO" id="GO:0004095">
    <property type="term" value="F:carnitine O-palmitoyltransferase activity"/>
    <property type="evidence" value="ECO:0000250"/>
    <property type="project" value="SGD"/>
</dbReference>
<dbReference type="GO" id="GO:0009437">
    <property type="term" value="P:carnitine metabolic process"/>
    <property type="evidence" value="ECO:0000315"/>
    <property type="project" value="SGD"/>
</dbReference>
<dbReference type="GO" id="GO:0006631">
    <property type="term" value="P:fatty acid metabolic process"/>
    <property type="evidence" value="ECO:0007669"/>
    <property type="project" value="UniProtKB-KW"/>
</dbReference>
<dbReference type="FunFam" id="3.30.559.10:FF:000019">
    <property type="entry name" value="Carnitine acetyl transferase"/>
    <property type="match status" value="1"/>
</dbReference>
<dbReference type="FunFam" id="3.30.559.70:FF:000003">
    <property type="entry name" value="Carnitine acetyl transferase FacC"/>
    <property type="match status" value="1"/>
</dbReference>
<dbReference type="Gene3D" id="3.30.559.10">
    <property type="entry name" value="Chloramphenicol acetyltransferase-like domain"/>
    <property type="match status" value="1"/>
</dbReference>
<dbReference type="Gene3D" id="3.30.559.70">
    <property type="entry name" value="Choline/Carnitine o-acyltransferase, domain 2"/>
    <property type="match status" value="1"/>
</dbReference>
<dbReference type="InterPro" id="IPR000542">
    <property type="entry name" value="Carn_acyl_trans"/>
</dbReference>
<dbReference type="InterPro" id="IPR023213">
    <property type="entry name" value="CAT-like_dom_sf"/>
</dbReference>
<dbReference type="InterPro" id="IPR039551">
    <property type="entry name" value="Cho/carn_acyl_trans"/>
</dbReference>
<dbReference type="InterPro" id="IPR042231">
    <property type="entry name" value="Cho/carn_acyl_trans_2"/>
</dbReference>
<dbReference type="PANTHER" id="PTHR22589">
    <property type="entry name" value="CARNITINE O-ACYLTRANSFERASE"/>
    <property type="match status" value="1"/>
</dbReference>
<dbReference type="PANTHER" id="PTHR22589:SF29">
    <property type="entry name" value="MITOCHONDRIAL CARNITINE O-ACETYLTRANSFERASE-RELATED"/>
    <property type="match status" value="1"/>
</dbReference>
<dbReference type="Pfam" id="PF00755">
    <property type="entry name" value="Carn_acyltransf"/>
    <property type="match status" value="1"/>
</dbReference>
<dbReference type="SUPFAM" id="SSF52777">
    <property type="entry name" value="CoA-dependent acyltransferases"/>
    <property type="match status" value="2"/>
</dbReference>
<dbReference type="PROSITE" id="PS00439">
    <property type="entry name" value="ACYLTRANSF_C_1"/>
    <property type="match status" value="1"/>
</dbReference>
<dbReference type="PROSITE" id="PS00440">
    <property type="entry name" value="ACYLTRANSF_C_2"/>
    <property type="match status" value="1"/>
</dbReference>
<evidence type="ECO:0000250" key="1"/>
<evidence type="ECO:0000305" key="2"/>
<evidence type="ECO:0007744" key="3">
    <source>
    </source>
</evidence>
<name>CACM_YEAST</name>
<reference key="1">
    <citation type="journal article" date="1993" name="J. Biol. Chem.">
        <title>The ethanol-inducible YAT1 gene from yeast encodes a presumptive mitochondrial outer carnitine acetyltransferase.</title>
        <authorList>
            <person name="Schmalix W.A."/>
            <person name="Bandlow W."/>
        </authorList>
    </citation>
    <scope>NUCLEOTIDE SEQUENCE [GENOMIC DNA]</scope>
    <source>
        <strain>DL-1</strain>
    </source>
</reference>
<reference key="2">
    <citation type="submission" date="1994-02" db="EMBL/GenBank/DDBJ databases">
        <title>Sequencing of chromosome I of Saccharomyces cerevisiae: analysis of the 52 Kbp CDC15-FLO1-PHO11-YAR074 region.</title>
        <authorList>
            <person name="Bussey H."/>
            <person name="Keng T."/>
            <person name="Storms R.K."/>
            <person name="Vo D."/>
            <person name="Zhong W."/>
            <person name="Fortin N."/>
            <person name="Barton A.B."/>
            <person name="Kaback D.B."/>
            <person name="Clark M.W."/>
        </authorList>
    </citation>
    <scope>NUCLEOTIDE SEQUENCE [GENOMIC DNA]</scope>
    <source>
        <strain>ATCC 204511 / S288c / AB972</strain>
    </source>
</reference>
<reference key="3">
    <citation type="journal article" date="1995" name="Proc. Natl. Acad. Sci. U.S.A.">
        <title>The nucleotide sequence of chromosome I from Saccharomyces cerevisiae.</title>
        <authorList>
            <person name="Bussey H."/>
            <person name="Kaback D.B."/>
            <person name="Zhong W.-W."/>
            <person name="Vo D.H."/>
            <person name="Clark M.W."/>
            <person name="Fortin N."/>
            <person name="Hall J."/>
            <person name="Ouellette B.F.F."/>
            <person name="Keng T."/>
            <person name="Barton A.B."/>
            <person name="Su Y."/>
            <person name="Davies C.J."/>
            <person name="Storms R.K."/>
        </authorList>
    </citation>
    <scope>NUCLEOTIDE SEQUENCE [LARGE SCALE GENOMIC DNA]</scope>
    <source>
        <strain>ATCC 204508 / S288c</strain>
    </source>
</reference>
<reference key="4">
    <citation type="journal article" date="2014" name="G3 (Bethesda)">
        <title>The reference genome sequence of Saccharomyces cerevisiae: Then and now.</title>
        <authorList>
            <person name="Engel S.R."/>
            <person name="Dietrich F.S."/>
            <person name="Fisk D.G."/>
            <person name="Binkley G."/>
            <person name="Balakrishnan R."/>
            <person name="Costanzo M.C."/>
            <person name="Dwight S.S."/>
            <person name="Hitz B.C."/>
            <person name="Karra K."/>
            <person name="Nash R.S."/>
            <person name="Weng S."/>
            <person name="Wong E.D."/>
            <person name="Lloyd P."/>
            <person name="Skrzypek M.S."/>
            <person name="Miyasato S.R."/>
            <person name="Simison M."/>
            <person name="Cherry J.M."/>
        </authorList>
    </citation>
    <scope>GENOME REANNOTATION</scope>
    <source>
        <strain>ATCC 204508 / S288c</strain>
    </source>
</reference>
<reference key="5">
    <citation type="journal article" date="2007" name="Mol. Cell. Proteomics">
        <title>Profiling phosphoproteins of yeast mitochondria reveals a role of phosphorylation in assembly of the ATP synthase.</title>
        <authorList>
            <person name="Reinders J."/>
            <person name="Wagner K."/>
            <person name="Zahedi R.P."/>
            <person name="Stojanovski D."/>
            <person name="Eyrich B."/>
            <person name="van der Laan M."/>
            <person name="Rehling P."/>
            <person name="Sickmann A."/>
            <person name="Pfanner N."/>
            <person name="Meisinger C."/>
        </authorList>
    </citation>
    <scope>PHOSPHORYLATION [LARGE SCALE ANALYSIS] AT SER-517</scope>
    <scope>IDENTIFICATION BY MASS SPECTROMETRY [LARGE SCALE ANALYSIS]</scope>
    <source>
        <strain>ATCC 76625 / YPH499</strain>
    </source>
</reference>
<protein>
    <recommendedName>
        <fullName>Putative mitochondrial carnitine O-acetyltransferase</fullName>
        <ecNumber>2.3.1.7</ecNumber>
    </recommendedName>
</protein>
<accession>P80235</accession>
<accession>D6VPN4</accession>
<keyword id="KW-0012">Acyltransferase</keyword>
<keyword id="KW-0276">Fatty acid metabolism</keyword>
<keyword id="KW-0443">Lipid metabolism</keyword>
<keyword id="KW-0472">Membrane</keyword>
<keyword id="KW-0496">Mitochondrion</keyword>
<keyword id="KW-0999">Mitochondrion inner membrane</keyword>
<keyword id="KW-0597">Phosphoprotein</keyword>
<keyword id="KW-1185">Reference proteome</keyword>
<keyword id="KW-0808">Transferase</keyword>
<keyword id="KW-0813">Transport</keyword>
<feature type="chain" id="PRO_0000210175" description="Putative mitochondrial carnitine O-acetyltransferase">
    <location>
        <begin position="1"/>
        <end position="687"/>
    </location>
</feature>
<feature type="active site" description="Proton acceptor" evidence="1">
    <location>
        <position position="346"/>
    </location>
</feature>
<feature type="binding site" evidence="1">
    <location>
        <begin position="446"/>
        <end position="459"/>
    </location>
    <ligand>
        <name>CoA</name>
        <dbReference type="ChEBI" id="CHEBI:57287"/>
    </ligand>
</feature>
<feature type="binding site" evidence="1">
    <location>
        <position position="481"/>
    </location>
    <ligand>
        <name>(R)-carnitine</name>
        <dbReference type="ChEBI" id="CHEBI:16347"/>
    </ligand>
</feature>
<feature type="binding site" evidence="1">
    <location>
        <position position="494"/>
    </location>
    <ligand>
        <name>(R)-carnitine</name>
        <dbReference type="ChEBI" id="CHEBI:16347"/>
    </ligand>
</feature>
<feature type="modified residue" description="Phosphoserine" evidence="3">
    <location>
        <position position="517"/>
    </location>
</feature>
<feature type="sequence conflict" description="In Ref. 1; CAA52647." evidence="2" ref="1">
    <original>P</original>
    <variation>T</variation>
    <location>
        <position position="25"/>
    </location>
</feature>
<feature type="sequence conflict" description="In Ref. 1; CAA52647." evidence="2" ref="1">
    <original>S</original>
    <variation>SS</variation>
    <location>
        <position position="392"/>
    </location>
</feature>
<feature type="sequence conflict" description="In Ref. 1; CAA52647." evidence="2" ref="1">
    <original>SF</original>
    <variation>AS</variation>
    <location>
        <begin position="595"/>
        <end position="596"/>
    </location>
</feature>
<feature type="sequence conflict" description="In Ref. 1; CAA52647." evidence="2" ref="1">
    <original>A</original>
    <variation>T</variation>
    <location>
        <position position="653"/>
    </location>
</feature>
<feature type="sequence conflict" description="In Ref. 1; CAA52647." evidence="2" ref="1">
    <original>T</original>
    <variation>A</variation>
    <location>
        <position position="660"/>
    </location>
</feature>